<name>SDHB_PEPAS</name>
<feature type="chain" id="PRO_0000171918" description="L-serine dehydratase, beta chain">
    <location>
        <begin position="1"/>
        <end position="222"/>
    </location>
</feature>
<feature type="domain" description="ACT" evidence="1">
    <location>
        <begin position="150"/>
        <end position="222"/>
    </location>
</feature>
<evidence type="ECO:0000255" key="1">
    <source>
        <dbReference type="PROSITE-ProRule" id="PRU01007"/>
    </source>
</evidence>
<evidence type="ECO:0000305" key="2"/>
<reference key="1">
    <citation type="journal article" date="1997" name="J. Bacteriol.">
        <title>Cloning and expression of the two genes coding for L-serine dehydratase from Peptostreptococcus asaccharolyticus: relationship of the iron-sulfur protein to both L-serine dehydratases from Escherichia coli.</title>
        <authorList>
            <person name="Hofmeister A.E."/>
            <person name="Textor S."/>
            <person name="Buckel W."/>
        </authorList>
    </citation>
    <scope>NUCLEOTIDE SEQUENCE [GENOMIC DNA]</scope>
    <source>
        <strain>ATCC 14963 / DSM 20463 / JCM 1765 / NCIMB 10074 / NCTC 11461 / UW 228</strain>
    </source>
</reference>
<reference key="2">
    <citation type="journal article" date="1991" name="Eur. J. Biochem.">
        <title>Purification and properties of an iron-sulfur-containing and pyridoxal-phosphate-independent L-serine dehydratase from Peptostreptococcus asaccharolyticus.</title>
        <authorList>
            <person name="Grabowski R."/>
            <person name="Buckel W."/>
        </authorList>
    </citation>
    <scope>PROTEIN SEQUENCE OF 4-19</scope>
    <source>
        <strain>ATCC 14963 / DSM 20463 / JCM 1765 / NCIMB 10074 / NCTC 11461 / UW 228</strain>
    </source>
</reference>
<gene>
    <name type="primary">sdhB</name>
</gene>
<protein>
    <recommendedName>
        <fullName>L-serine dehydratase, beta chain</fullName>
        <shortName>SDH</shortName>
        <ecNumber>4.3.1.17</ecNumber>
    </recommendedName>
    <alternativeName>
        <fullName>L-serine deaminase</fullName>
        <shortName>L-SD</shortName>
    </alternativeName>
</protein>
<organism>
    <name type="scientific">Peptoniphilus asaccharolyticus</name>
    <name type="common">Peptostreptococcus asaccharolyticus</name>
    <dbReference type="NCBI Taxonomy" id="1258"/>
    <lineage>
        <taxon>Bacteria</taxon>
        <taxon>Bacillati</taxon>
        <taxon>Bacillota</taxon>
        <taxon>Tissierellia</taxon>
        <taxon>Tissierellales</taxon>
        <taxon>Peptoniphilaceae</taxon>
        <taxon>Peptoniphilus</taxon>
    </lineage>
</organism>
<keyword id="KW-0004">4Fe-4S</keyword>
<keyword id="KW-0903">Direct protein sequencing</keyword>
<keyword id="KW-0312">Gluconeogenesis</keyword>
<keyword id="KW-0408">Iron</keyword>
<keyword id="KW-0411">Iron-sulfur</keyword>
<keyword id="KW-0456">Lyase</keyword>
<keyword id="KW-0479">Metal-binding</keyword>
<comment type="catalytic activity">
    <reaction>
        <text>L-serine = pyruvate + NH4(+)</text>
        <dbReference type="Rhea" id="RHEA:19169"/>
        <dbReference type="ChEBI" id="CHEBI:15361"/>
        <dbReference type="ChEBI" id="CHEBI:28938"/>
        <dbReference type="ChEBI" id="CHEBI:33384"/>
        <dbReference type="EC" id="4.3.1.17"/>
    </reaction>
</comment>
<comment type="cofactor">
    <cofactor>
        <name>[4Fe-4S] cluster</name>
        <dbReference type="ChEBI" id="CHEBI:49883"/>
    </cofactor>
    <text>Binds 1 [4Fe-4S] cluster.</text>
</comment>
<comment type="pathway">
    <text>Carbohydrate biosynthesis; gluconeogenesis.</text>
</comment>
<comment type="subunit">
    <text>Heterooctamer of four alpha chains and four beta chains.</text>
</comment>
<comment type="similarity">
    <text evidence="2">Belongs to the iron-sulfur dependent L-serine dehydratase family.</text>
</comment>
<dbReference type="EC" id="4.3.1.17"/>
<dbReference type="EMBL" id="U76260">
    <property type="protein sequence ID" value="AAC45545.1"/>
    <property type="molecule type" value="Genomic_DNA"/>
</dbReference>
<dbReference type="PIR" id="S16376">
    <property type="entry name" value="S16376"/>
</dbReference>
<dbReference type="SMR" id="P33074"/>
<dbReference type="BioCyc" id="MetaCyc:MONOMER-124242"/>
<dbReference type="UniPathway" id="UPA00138"/>
<dbReference type="GO" id="GO:0051539">
    <property type="term" value="F:4 iron, 4 sulfur cluster binding"/>
    <property type="evidence" value="ECO:0007669"/>
    <property type="project" value="UniProtKB-KW"/>
</dbReference>
<dbReference type="GO" id="GO:0003941">
    <property type="term" value="F:L-serine ammonia-lyase activity"/>
    <property type="evidence" value="ECO:0007669"/>
    <property type="project" value="UniProtKB-EC"/>
</dbReference>
<dbReference type="GO" id="GO:0046872">
    <property type="term" value="F:metal ion binding"/>
    <property type="evidence" value="ECO:0007669"/>
    <property type="project" value="UniProtKB-KW"/>
</dbReference>
<dbReference type="GO" id="GO:0006094">
    <property type="term" value="P:gluconeogenesis"/>
    <property type="evidence" value="ECO:0007669"/>
    <property type="project" value="UniProtKB-UniPathway"/>
</dbReference>
<dbReference type="Gene3D" id="3.30.1330.90">
    <property type="entry name" value="D-3-phosphoglycerate dehydrogenase, domain 3"/>
    <property type="match status" value="1"/>
</dbReference>
<dbReference type="InterPro" id="IPR045865">
    <property type="entry name" value="ACT-like_dom_sf"/>
</dbReference>
<dbReference type="InterPro" id="IPR002912">
    <property type="entry name" value="ACT_dom"/>
</dbReference>
<dbReference type="InterPro" id="IPR029009">
    <property type="entry name" value="ASB_dom_sf"/>
</dbReference>
<dbReference type="InterPro" id="IPR051318">
    <property type="entry name" value="Fe-S_L-Ser"/>
</dbReference>
<dbReference type="InterPro" id="IPR004643">
    <property type="entry name" value="Fe-S_L-Ser_bsu"/>
</dbReference>
<dbReference type="InterPro" id="IPR005131">
    <property type="entry name" value="Ser_deHydtase_bsu"/>
</dbReference>
<dbReference type="NCBIfam" id="TIGR00719">
    <property type="entry name" value="sda_beta"/>
    <property type="match status" value="1"/>
</dbReference>
<dbReference type="PANTHER" id="PTHR30182">
    <property type="entry name" value="L-SERINE DEHYDRATASE"/>
    <property type="match status" value="1"/>
</dbReference>
<dbReference type="PANTHER" id="PTHR30182:SF12">
    <property type="entry name" value="L-SERINE DEHYDRATASE, BETA CHAIN-RELATED"/>
    <property type="match status" value="1"/>
</dbReference>
<dbReference type="Pfam" id="PF03315">
    <property type="entry name" value="SDH_beta"/>
    <property type="match status" value="1"/>
</dbReference>
<dbReference type="PIRSF" id="PIRSF036692">
    <property type="entry name" value="SDH_B"/>
    <property type="match status" value="1"/>
</dbReference>
<dbReference type="SUPFAM" id="SSF55021">
    <property type="entry name" value="ACT-like"/>
    <property type="match status" value="1"/>
</dbReference>
<dbReference type="SUPFAM" id="SSF143548">
    <property type="entry name" value="Serine metabolism enzymes domain"/>
    <property type="match status" value="1"/>
</dbReference>
<dbReference type="PROSITE" id="PS51671">
    <property type="entry name" value="ACT"/>
    <property type="match status" value="1"/>
</dbReference>
<accession>P33074</accession>
<proteinExistence type="evidence at protein level"/>
<sequence length="222" mass="24151">MTDYSAFEVMGPIMVGPSSSHTAGACKIANVATSIVSNNYNQVEFQLHGSFAHTFKGHGTDRALVGGILGFEPDDDRIKTSFELAKQAGLNYIFTTTNLGDNYHPNSVKIVFSYPNGEEEYVIGSSIGGGAMKIVNINGIAIEFRGEYSTILLEYPEQRGVISYVSSLLTGSEYNIESLNTKKNKLTNIVTLTVEIDKPLTESLKSAILGVERFTTAKYVEV</sequence>